<comment type="subcellular location">
    <subcellularLocation>
        <location>Plastid</location>
        <location>Chloroplast</location>
    </subcellularLocation>
</comment>
<comment type="similarity">
    <text evidence="1">Belongs to the bacterial ribosomal protein bL36 family.</text>
</comment>
<evidence type="ECO:0000255" key="1">
    <source>
        <dbReference type="HAMAP-Rule" id="MF_00251"/>
    </source>
</evidence>
<evidence type="ECO:0000305" key="2"/>
<proteinExistence type="inferred from homology"/>
<protein>
    <recommendedName>
        <fullName evidence="1">Large ribosomal subunit protein bL36c</fullName>
    </recommendedName>
    <alternativeName>
        <fullName evidence="2">50S ribosomal protein L36, chloroplastic</fullName>
    </alternativeName>
</protein>
<accession>Q9MTJ1</accession>
<reference key="1">
    <citation type="journal article" date="2000" name="Mol. Gen. Genet.">
        <title>Complete nucleotide sequence of the Oenothera elata plastid chromosome, representing plastome I of the five distinguishable Euoenothera plastomes.</title>
        <authorList>
            <person name="Hupfer H."/>
            <person name="Swiatek M."/>
            <person name="Hornung S."/>
            <person name="Herrmann R.G."/>
            <person name="Maier R.M."/>
            <person name="Chiu W.-L."/>
            <person name="Sears B."/>
        </authorList>
    </citation>
    <scope>NUCLEOTIDE SEQUENCE [LARGE SCALE GENOMIC DNA]</scope>
    <source>
        <strain>cv. Johansen</strain>
    </source>
</reference>
<name>RK36_OENEH</name>
<dbReference type="EMBL" id="AJ271079">
    <property type="protein sequence ID" value="CAB67193.1"/>
    <property type="molecule type" value="Genomic_DNA"/>
</dbReference>
<dbReference type="RefSeq" id="NP_084727.1">
    <property type="nucleotide sequence ID" value="NC_002693.2"/>
</dbReference>
<dbReference type="SMR" id="Q9MTJ1"/>
<dbReference type="GeneID" id="802740"/>
<dbReference type="GO" id="GO:0009507">
    <property type="term" value="C:chloroplast"/>
    <property type="evidence" value="ECO:0007669"/>
    <property type="project" value="UniProtKB-SubCell"/>
</dbReference>
<dbReference type="GO" id="GO:1990904">
    <property type="term" value="C:ribonucleoprotein complex"/>
    <property type="evidence" value="ECO:0007669"/>
    <property type="project" value="UniProtKB-KW"/>
</dbReference>
<dbReference type="GO" id="GO:0005840">
    <property type="term" value="C:ribosome"/>
    <property type="evidence" value="ECO:0007669"/>
    <property type="project" value="UniProtKB-KW"/>
</dbReference>
<dbReference type="GO" id="GO:0003735">
    <property type="term" value="F:structural constituent of ribosome"/>
    <property type="evidence" value="ECO:0007669"/>
    <property type="project" value="InterPro"/>
</dbReference>
<dbReference type="GO" id="GO:0006412">
    <property type="term" value="P:translation"/>
    <property type="evidence" value="ECO:0007669"/>
    <property type="project" value="UniProtKB-UniRule"/>
</dbReference>
<dbReference type="HAMAP" id="MF_00251">
    <property type="entry name" value="Ribosomal_bL36"/>
    <property type="match status" value="1"/>
</dbReference>
<dbReference type="InterPro" id="IPR000473">
    <property type="entry name" value="Ribosomal_bL36"/>
</dbReference>
<dbReference type="InterPro" id="IPR035977">
    <property type="entry name" value="Ribosomal_bL36_sp"/>
</dbReference>
<dbReference type="NCBIfam" id="TIGR01022">
    <property type="entry name" value="rpmJ_bact"/>
    <property type="match status" value="1"/>
</dbReference>
<dbReference type="PANTHER" id="PTHR42888">
    <property type="entry name" value="50S RIBOSOMAL PROTEIN L36, CHLOROPLASTIC"/>
    <property type="match status" value="1"/>
</dbReference>
<dbReference type="PANTHER" id="PTHR42888:SF1">
    <property type="entry name" value="LARGE RIBOSOMAL SUBUNIT PROTEIN BL36C"/>
    <property type="match status" value="1"/>
</dbReference>
<dbReference type="Pfam" id="PF00444">
    <property type="entry name" value="Ribosomal_L36"/>
    <property type="match status" value="1"/>
</dbReference>
<dbReference type="SUPFAM" id="SSF57840">
    <property type="entry name" value="Ribosomal protein L36"/>
    <property type="match status" value="1"/>
</dbReference>
<dbReference type="PROSITE" id="PS00828">
    <property type="entry name" value="RIBOSOMAL_L36"/>
    <property type="match status" value="1"/>
</dbReference>
<gene>
    <name evidence="1" type="primary">rpl36</name>
</gene>
<keyword id="KW-0150">Chloroplast</keyword>
<keyword id="KW-0934">Plastid</keyword>
<keyword id="KW-0687">Ribonucleoprotein</keyword>
<keyword id="KW-0689">Ribosomal protein</keyword>
<geneLocation type="chloroplast"/>
<organism>
    <name type="scientific">Oenothera elata subsp. hookeri</name>
    <name type="common">Hooker's evening primrose</name>
    <name type="synonym">Oenothera hookeri</name>
    <dbReference type="NCBI Taxonomy" id="85636"/>
    <lineage>
        <taxon>Eukaryota</taxon>
        <taxon>Viridiplantae</taxon>
        <taxon>Streptophyta</taxon>
        <taxon>Embryophyta</taxon>
        <taxon>Tracheophyta</taxon>
        <taxon>Spermatophyta</taxon>
        <taxon>Magnoliopsida</taxon>
        <taxon>eudicotyledons</taxon>
        <taxon>Gunneridae</taxon>
        <taxon>Pentapetalae</taxon>
        <taxon>rosids</taxon>
        <taxon>malvids</taxon>
        <taxon>Myrtales</taxon>
        <taxon>Onagraceae</taxon>
        <taxon>Onagroideae</taxon>
        <taxon>Onagreae</taxon>
        <taxon>Oenothera</taxon>
    </lineage>
</organism>
<sequence length="37" mass="4432">MKIRASVRKICTKCRLIRRRGRIIVICSNPRHKQRQG</sequence>
<feature type="chain" id="PRO_0000126332" description="Large ribosomal subunit protein bL36c">
    <location>
        <begin position="1"/>
        <end position="37"/>
    </location>
</feature>